<reference key="1">
    <citation type="journal article" date="2008" name="PLoS ONE">
        <title>Genome sequence of Brucella abortus vaccine strain S19 compared to virulent strains yields candidate virulence genes.</title>
        <authorList>
            <person name="Crasta O.R."/>
            <person name="Folkerts O."/>
            <person name="Fei Z."/>
            <person name="Mane S.P."/>
            <person name="Evans C."/>
            <person name="Martino-Catt S."/>
            <person name="Bricker B."/>
            <person name="Yu G."/>
            <person name="Du L."/>
            <person name="Sobral B.W."/>
        </authorList>
    </citation>
    <scope>NUCLEOTIDE SEQUENCE [LARGE SCALE GENOMIC DNA]</scope>
    <source>
        <strain>S19</strain>
    </source>
</reference>
<evidence type="ECO:0000255" key="1">
    <source>
        <dbReference type="HAMAP-Rule" id="MF_01345"/>
    </source>
</evidence>
<evidence type="ECO:0000305" key="2"/>
<accession>B2S670</accession>
<protein>
    <recommendedName>
        <fullName evidence="1">Small ribosomal subunit protein uS17</fullName>
    </recommendedName>
    <alternativeName>
        <fullName evidence="2">30S ribosomal protein S17</fullName>
    </alternativeName>
</protein>
<feature type="chain" id="PRO_1000143229" description="Small ribosomal subunit protein uS17">
    <location>
        <begin position="1"/>
        <end position="80"/>
    </location>
</feature>
<proteinExistence type="inferred from homology"/>
<gene>
    <name evidence="1" type="primary">rpsQ</name>
    <name type="ordered locus">BAbS19_I11620</name>
</gene>
<dbReference type="EMBL" id="CP000887">
    <property type="protein sequence ID" value="ACD72667.1"/>
    <property type="molecule type" value="Genomic_DNA"/>
</dbReference>
<dbReference type="RefSeq" id="WP_002964353.1">
    <property type="nucleotide sequence ID" value="NC_010742.1"/>
</dbReference>
<dbReference type="SMR" id="B2S670"/>
<dbReference type="GeneID" id="97533533"/>
<dbReference type="KEGG" id="bmc:BAbS19_I11620"/>
<dbReference type="HOGENOM" id="CLU_073626_1_1_5"/>
<dbReference type="Proteomes" id="UP000002565">
    <property type="component" value="Chromosome 1"/>
</dbReference>
<dbReference type="GO" id="GO:0022627">
    <property type="term" value="C:cytosolic small ribosomal subunit"/>
    <property type="evidence" value="ECO:0007669"/>
    <property type="project" value="TreeGrafter"/>
</dbReference>
<dbReference type="GO" id="GO:0019843">
    <property type="term" value="F:rRNA binding"/>
    <property type="evidence" value="ECO:0007669"/>
    <property type="project" value="UniProtKB-UniRule"/>
</dbReference>
<dbReference type="GO" id="GO:0003735">
    <property type="term" value="F:structural constituent of ribosome"/>
    <property type="evidence" value="ECO:0007669"/>
    <property type="project" value="InterPro"/>
</dbReference>
<dbReference type="GO" id="GO:0006412">
    <property type="term" value="P:translation"/>
    <property type="evidence" value="ECO:0007669"/>
    <property type="project" value="UniProtKB-UniRule"/>
</dbReference>
<dbReference type="CDD" id="cd00364">
    <property type="entry name" value="Ribosomal_uS17"/>
    <property type="match status" value="1"/>
</dbReference>
<dbReference type="Gene3D" id="2.40.50.140">
    <property type="entry name" value="Nucleic acid-binding proteins"/>
    <property type="match status" value="1"/>
</dbReference>
<dbReference type="HAMAP" id="MF_01345_B">
    <property type="entry name" value="Ribosomal_uS17_B"/>
    <property type="match status" value="1"/>
</dbReference>
<dbReference type="InterPro" id="IPR012340">
    <property type="entry name" value="NA-bd_OB-fold"/>
</dbReference>
<dbReference type="InterPro" id="IPR000266">
    <property type="entry name" value="Ribosomal_uS17"/>
</dbReference>
<dbReference type="InterPro" id="IPR019984">
    <property type="entry name" value="Ribosomal_uS17_bact/chlr"/>
</dbReference>
<dbReference type="NCBIfam" id="NF004123">
    <property type="entry name" value="PRK05610.1"/>
    <property type="match status" value="1"/>
</dbReference>
<dbReference type="NCBIfam" id="TIGR03635">
    <property type="entry name" value="uS17_bact"/>
    <property type="match status" value="1"/>
</dbReference>
<dbReference type="PANTHER" id="PTHR10744">
    <property type="entry name" value="40S RIBOSOMAL PROTEIN S11 FAMILY MEMBER"/>
    <property type="match status" value="1"/>
</dbReference>
<dbReference type="PANTHER" id="PTHR10744:SF1">
    <property type="entry name" value="SMALL RIBOSOMAL SUBUNIT PROTEIN US17M"/>
    <property type="match status" value="1"/>
</dbReference>
<dbReference type="Pfam" id="PF00366">
    <property type="entry name" value="Ribosomal_S17"/>
    <property type="match status" value="1"/>
</dbReference>
<dbReference type="PRINTS" id="PR00973">
    <property type="entry name" value="RIBOSOMALS17"/>
</dbReference>
<dbReference type="SUPFAM" id="SSF50249">
    <property type="entry name" value="Nucleic acid-binding proteins"/>
    <property type="match status" value="1"/>
</dbReference>
<organism>
    <name type="scientific">Brucella abortus (strain S19)</name>
    <dbReference type="NCBI Taxonomy" id="430066"/>
    <lineage>
        <taxon>Bacteria</taxon>
        <taxon>Pseudomonadati</taxon>
        <taxon>Pseudomonadota</taxon>
        <taxon>Alphaproteobacteria</taxon>
        <taxon>Hyphomicrobiales</taxon>
        <taxon>Brucellaceae</taxon>
        <taxon>Brucella/Ochrobactrum group</taxon>
        <taxon>Brucella</taxon>
    </lineage>
</organism>
<keyword id="KW-0687">Ribonucleoprotein</keyword>
<keyword id="KW-0689">Ribosomal protein</keyword>
<keyword id="KW-0694">RNA-binding</keyword>
<keyword id="KW-0699">rRNA-binding</keyword>
<name>RS17_BRUA1</name>
<comment type="function">
    <text evidence="1">One of the primary rRNA binding proteins, it binds specifically to the 5'-end of 16S ribosomal RNA.</text>
</comment>
<comment type="subunit">
    <text evidence="1">Part of the 30S ribosomal subunit.</text>
</comment>
<comment type="similarity">
    <text evidence="1">Belongs to the universal ribosomal protein uS17 family.</text>
</comment>
<sequence>MPKRVLQGVVVSDKNDKTVVVKVERRYSHPLLQKTVRQSKKYKAHDENNQFKVGDFVSIQESAPISKDKRWVVLTSEAAG</sequence>